<dbReference type="EC" id="2.7.3.9" evidence="1"/>
<dbReference type="EMBL" id="AB016285">
    <property type="protein sequence ID" value="BAA31955.1"/>
    <property type="molecule type" value="Genomic_DNA"/>
</dbReference>
<dbReference type="SMR" id="O83018"/>
<dbReference type="GO" id="GO:0005737">
    <property type="term" value="C:cytoplasm"/>
    <property type="evidence" value="ECO:0007669"/>
    <property type="project" value="UniProtKB-SubCell"/>
</dbReference>
<dbReference type="GO" id="GO:0016301">
    <property type="term" value="F:kinase activity"/>
    <property type="evidence" value="ECO:0007669"/>
    <property type="project" value="UniProtKB-KW"/>
</dbReference>
<dbReference type="GO" id="GO:0046872">
    <property type="term" value="F:metal ion binding"/>
    <property type="evidence" value="ECO:0007669"/>
    <property type="project" value="UniProtKB-KW"/>
</dbReference>
<dbReference type="GO" id="GO:0008965">
    <property type="term" value="F:phosphoenolpyruvate-protein phosphotransferase activity"/>
    <property type="evidence" value="ECO:0007669"/>
    <property type="project" value="UniProtKB-EC"/>
</dbReference>
<dbReference type="GO" id="GO:0009401">
    <property type="term" value="P:phosphoenolpyruvate-dependent sugar phosphotransferase system"/>
    <property type="evidence" value="ECO:0007669"/>
    <property type="project" value="UniProtKB-KW"/>
</dbReference>
<dbReference type="FunFam" id="1.10.274.10:FF:000001">
    <property type="entry name" value="Phosphoenolpyruvate-protein phosphotransferase"/>
    <property type="match status" value="1"/>
</dbReference>
<dbReference type="FunFam" id="3.20.20.60:FF:000007">
    <property type="entry name" value="Phosphoenolpyruvate-protein phosphotransferase"/>
    <property type="match status" value="1"/>
</dbReference>
<dbReference type="FunFam" id="3.50.30.10:FF:000001">
    <property type="entry name" value="Phosphoenolpyruvate-protein phosphotransferase"/>
    <property type="match status" value="1"/>
</dbReference>
<dbReference type="Gene3D" id="3.20.20.60">
    <property type="entry name" value="Phosphoenolpyruvate-binding domains"/>
    <property type="match status" value="1"/>
</dbReference>
<dbReference type="Gene3D" id="3.50.30.10">
    <property type="entry name" value="Phosphohistidine domain"/>
    <property type="match status" value="1"/>
</dbReference>
<dbReference type="Gene3D" id="1.10.274.10">
    <property type="entry name" value="PtsI, HPr-binding domain"/>
    <property type="match status" value="1"/>
</dbReference>
<dbReference type="InterPro" id="IPR008279">
    <property type="entry name" value="PEP-util_enz_mobile_dom"/>
</dbReference>
<dbReference type="InterPro" id="IPR050499">
    <property type="entry name" value="PEP-utilizing_PTS_enzyme"/>
</dbReference>
<dbReference type="InterPro" id="IPR018274">
    <property type="entry name" value="PEP_util_AS"/>
</dbReference>
<dbReference type="InterPro" id="IPR000121">
    <property type="entry name" value="PEP_util_C"/>
</dbReference>
<dbReference type="InterPro" id="IPR023151">
    <property type="entry name" value="PEP_util_CS"/>
</dbReference>
<dbReference type="InterPro" id="IPR036637">
    <property type="entry name" value="Phosphohistidine_dom_sf"/>
</dbReference>
<dbReference type="InterPro" id="IPR024692">
    <property type="entry name" value="PTS_EI"/>
</dbReference>
<dbReference type="InterPro" id="IPR006318">
    <property type="entry name" value="PTS_EI-like"/>
</dbReference>
<dbReference type="InterPro" id="IPR008731">
    <property type="entry name" value="PTS_EIN"/>
</dbReference>
<dbReference type="InterPro" id="IPR036618">
    <property type="entry name" value="PtsI_HPr-bd_sf"/>
</dbReference>
<dbReference type="InterPro" id="IPR015813">
    <property type="entry name" value="Pyrv/PenolPyrv_kinase-like_dom"/>
</dbReference>
<dbReference type="InterPro" id="IPR040442">
    <property type="entry name" value="Pyrv_kinase-like_dom_sf"/>
</dbReference>
<dbReference type="NCBIfam" id="TIGR01417">
    <property type="entry name" value="PTS_I_fam"/>
    <property type="match status" value="1"/>
</dbReference>
<dbReference type="PANTHER" id="PTHR46244">
    <property type="entry name" value="PHOSPHOENOLPYRUVATE-PROTEIN PHOSPHOTRANSFERASE"/>
    <property type="match status" value="1"/>
</dbReference>
<dbReference type="PANTHER" id="PTHR46244:SF3">
    <property type="entry name" value="PHOSPHOENOLPYRUVATE-PROTEIN PHOSPHOTRANSFERASE"/>
    <property type="match status" value="1"/>
</dbReference>
<dbReference type="Pfam" id="PF05524">
    <property type="entry name" value="PEP-utilisers_N"/>
    <property type="match status" value="1"/>
</dbReference>
<dbReference type="Pfam" id="PF00391">
    <property type="entry name" value="PEP-utilizers"/>
    <property type="match status" value="1"/>
</dbReference>
<dbReference type="Pfam" id="PF02896">
    <property type="entry name" value="PEP-utilizers_C"/>
    <property type="match status" value="1"/>
</dbReference>
<dbReference type="PIRSF" id="PIRSF000732">
    <property type="entry name" value="PTS_enzyme_I"/>
    <property type="match status" value="1"/>
</dbReference>
<dbReference type="PRINTS" id="PR01736">
    <property type="entry name" value="PHPHTRNFRASE"/>
</dbReference>
<dbReference type="SUPFAM" id="SSF47831">
    <property type="entry name" value="Enzyme I of the PEP:sugar phosphotransferase system HPr-binding (sub)domain"/>
    <property type="match status" value="1"/>
</dbReference>
<dbReference type="SUPFAM" id="SSF51621">
    <property type="entry name" value="Phosphoenolpyruvate/pyruvate domain"/>
    <property type="match status" value="1"/>
</dbReference>
<dbReference type="SUPFAM" id="SSF52009">
    <property type="entry name" value="Phosphohistidine domain"/>
    <property type="match status" value="1"/>
</dbReference>
<dbReference type="PROSITE" id="PS00742">
    <property type="entry name" value="PEP_ENZYMES_2"/>
    <property type="match status" value="1"/>
</dbReference>
<dbReference type="PROSITE" id="PS00370">
    <property type="entry name" value="PEP_ENZYMES_PHOS_SITE"/>
    <property type="match status" value="1"/>
</dbReference>
<accession>O83018</accession>
<name>PT1_BACSI</name>
<proteinExistence type="inferred from homology"/>
<organism>
    <name type="scientific">Bacillus sp. (strain S)</name>
    <dbReference type="NCBI Taxonomy" id="126783"/>
    <lineage>
        <taxon>Bacteria</taxon>
        <taxon>Bacillati</taxon>
        <taxon>Bacillota</taxon>
        <taxon>Bacilli</taxon>
        <taxon>Bacillales</taxon>
        <taxon>Bacillaceae</taxon>
        <taxon>Bacillus</taxon>
    </lineage>
</organism>
<comment type="function">
    <text evidence="1">General (non sugar-specific) component of the phosphoenolpyruvate-dependent sugar phosphotransferase system (sugar PTS). This major carbohydrate active-transport system catalyzes the phosphorylation of incoming sugar substrates concomitantly with their translocation across the cell membrane. Enzyme I transfers the phosphoryl group from phosphoenolpyruvate (PEP) to the phosphoryl carrier protein (HPr).</text>
</comment>
<comment type="catalytic activity">
    <reaction evidence="1">
        <text>L-histidyl-[protein] + phosphoenolpyruvate = N(pros)-phospho-L-histidyl-[protein] + pyruvate</text>
        <dbReference type="Rhea" id="RHEA:23880"/>
        <dbReference type="Rhea" id="RHEA-COMP:9745"/>
        <dbReference type="Rhea" id="RHEA-COMP:9746"/>
        <dbReference type="ChEBI" id="CHEBI:15361"/>
        <dbReference type="ChEBI" id="CHEBI:29979"/>
        <dbReference type="ChEBI" id="CHEBI:58702"/>
        <dbReference type="ChEBI" id="CHEBI:64837"/>
        <dbReference type="EC" id="2.7.3.9"/>
    </reaction>
</comment>
<comment type="cofactor">
    <cofactor evidence="1">
        <name>Mg(2+)</name>
        <dbReference type="ChEBI" id="CHEBI:18420"/>
    </cofactor>
</comment>
<comment type="subunit">
    <text evidence="1">Homodimer.</text>
</comment>
<comment type="subcellular location">
    <subcellularLocation>
        <location evidence="3">Cytoplasm</location>
    </subcellularLocation>
</comment>
<comment type="domain">
    <text evidence="1">The N-terminal domain contains the HPr binding site, the central domain the pyrophosphate/phosphate carrier histidine, and the C-terminal domain the pyruvate binding site.</text>
</comment>
<comment type="miscellaneous">
    <text evidence="1">The reaction takes place in three steps, mediated by a phosphocarrier histidine residue located on the surface of the central domain. The two first partial reactions are catalyzed at an active site located on the N-terminal domain, and the third partial reaction is catalyzed at an active site located on the C-terminal domain. For catalytic turnover, the central domain swivels from the concave surface of the N-terminal domain to that of the C-terminal domain.</text>
</comment>
<comment type="similarity">
    <text evidence="3">Belongs to the PEP-utilizing enzyme family.</text>
</comment>
<keyword id="KW-0963">Cytoplasm</keyword>
<keyword id="KW-0418">Kinase</keyword>
<keyword id="KW-0460">Magnesium</keyword>
<keyword id="KW-0479">Metal-binding</keyword>
<keyword id="KW-0598">Phosphotransferase system</keyword>
<keyword id="KW-0762">Sugar transport</keyword>
<keyword id="KW-0808">Transferase</keyword>
<keyword id="KW-0813">Transport</keyword>
<evidence type="ECO:0000250" key="1">
    <source>
        <dbReference type="UniProtKB" id="P08839"/>
    </source>
</evidence>
<evidence type="ECO:0000250" key="2">
    <source>
        <dbReference type="UniProtKB" id="P23533"/>
    </source>
</evidence>
<evidence type="ECO:0000305" key="3"/>
<protein>
    <recommendedName>
        <fullName evidence="1">Phosphoenolpyruvate-protein phosphotransferase</fullName>
        <ecNumber evidence="1">2.7.3.9</ecNumber>
    </recommendedName>
    <alternativeName>
        <fullName evidence="1">Phosphotransferase system, enzyme I</fullName>
    </alternativeName>
</protein>
<gene>
    <name type="primary">ptsI</name>
</gene>
<feature type="chain" id="PRO_0000147056" description="Phosphoenolpyruvate-protein phosphotransferase">
    <location>
        <begin position="1"/>
        <end position="578"/>
    </location>
</feature>
<feature type="active site" description="Tele-phosphohistidine intermediate" evidence="1">
    <location>
        <position position="195"/>
    </location>
</feature>
<feature type="active site" description="Proton donor" evidence="1">
    <location>
        <position position="508"/>
    </location>
</feature>
<feature type="binding site" evidence="2">
    <location>
        <position position="302"/>
    </location>
    <ligand>
        <name>phosphoenolpyruvate</name>
        <dbReference type="ChEBI" id="CHEBI:58702"/>
    </ligand>
</feature>
<feature type="binding site" evidence="1">
    <location>
        <position position="338"/>
    </location>
    <ligand>
        <name>phosphoenolpyruvate</name>
        <dbReference type="ChEBI" id="CHEBI:58702"/>
    </ligand>
</feature>
<feature type="binding site" evidence="1">
    <location>
        <position position="437"/>
    </location>
    <ligand>
        <name>Mg(2+)</name>
        <dbReference type="ChEBI" id="CHEBI:18420"/>
    </ligand>
</feature>
<feature type="binding site" evidence="1">
    <location>
        <begin position="460"/>
        <end position="461"/>
    </location>
    <ligand>
        <name>phosphoenolpyruvate</name>
        <dbReference type="ChEBI" id="CHEBI:58702"/>
    </ligand>
</feature>
<feature type="binding site" evidence="1">
    <location>
        <position position="461"/>
    </location>
    <ligand>
        <name>Mg(2+)</name>
        <dbReference type="ChEBI" id="CHEBI:18420"/>
    </ligand>
</feature>
<feature type="binding site" evidence="2">
    <location>
        <position position="471"/>
    </location>
    <ligand>
        <name>phosphoenolpyruvate</name>
        <dbReference type="ChEBI" id="CHEBI:58702"/>
    </ligand>
</feature>
<sequence>MGNAIREKTIHGIAASSGIAIAKAYRLETPDLAAEKRAVADVEAEVARFEAAVAKAKEELEAIKQHALEKLGEDKAAIFAAHLLVLDDPELLNPIKEKIQTERVNAEYSLDETASFFISMFEAMDNEYMKERAADIRDVTKRVLAHLLGVTISNPSLISEEVVIIAEDLTPSDTAQLNRQYVKGFATDIGGRTSHSAIMARSLEIPAVVGTKTVTAEVKNGDIVIVDGLDGQVIINPSPELLAQYEQKRARYEAQKAEWAKLVHEATVTADGIHVELAANIGTPDDVKGALANGAEGIGLYRTEFLYMGRSELPTEDEQFVAYKTVLEQMNGKPVVVRTLDIGGDKELPYLQLPKEMNPFLGFRAIRLCLEMQDMFRTQLRALLRASVYGNLKIMFPMIATLDEFRQAKAILLEEKEALLRQGVAVADGIEVGMMVEIPAAAVMADQFAKEVDFFSIGTNDLIQYTMAADRMNERVAYLYQPYNPAILRLISHVIDAAHREGKWVGMCGEMAGDPIAIPILLALGLDEFSMSATSILPARAQLKQLAKEEAARIKETVLSLGTAEEVVSFVKRTFSLA</sequence>
<reference key="1">
    <citation type="submission" date="1998-07" db="EMBL/GenBank/DDBJ databases">
        <title>Bacillus sp. strain S phosphotransferase system enzyme I (ptsI) gene.</title>
        <authorList>
            <person name="Ohno M."/>
            <person name="Beppu T."/>
            <person name="Ueda K."/>
        </authorList>
    </citation>
    <scope>NUCLEOTIDE SEQUENCE [GENOMIC DNA]</scope>
</reference>